<protein>
    <recommendedName>
        <fullName evidence="1">Large ribosomal subunit protein bL36</fullName>
    </recommendedName>
    <alternativeName>
        <fullName evidence="2">50S ribosomal protein L36</fullName>
    </alternativeName>
</protein>
<reference key="1">
    <citation type="journal article" date="2004" name="Nucleic Acids Res.">
        <title>Whole genome comparisons of serotype 4b and 1/2a strains of the food-borne pathogen Listeria monocytogenes reveal new insights into the core genome components of this species.</title>
        <authorList>
            <person name="Nelson K.E."/>
            <person name="Fouts D.E."/>
            <person name="Mongodin E.F."/>
            <person name="Ravel J."/>
            <person name="DeBoy R.T."/>
            <person name="Kolonay J.F."/>
            <person name="Rasko D.A."/>
            <person name="Angiuoli S.V."/>
            <person name="Gill S.R."/>
            <person name="Paulsen I.T."/>
            <person name="Peterson J.D."/>
            <person name="White O."/>
            <person name="Nelson W.C."/>
            <person name="Nierman W.C."/>
            <person name="Beanan M.J."/>
            <person name="Brinkac L.M."/>
            <person name="Daugherty S.C."/>
            <person name="Dodson R.J."/>
            <person name="Durkin A.S."/>
            <person name="Madupu R."/>
            <person name="Haft D.H."/>
            <person name="Selengut J."/>
            <person name="Van Aken S.E."/>
            <person name="Khouri H.M."/>
            <person name="Fedorova N."/>
            <person name="Forberger H.A."/>
            <person name="Tran B."/>
            <person name="Kathariou S."/>
            <person name="Wonderling L.D."/>
            <person name="Uhlich G.A."/>
            <person name="Bayles D.O."/>
            <person name="Luchansky J.B."/>
            <person name="Fraser C.M."/>
        </authorList>
    </citation>
    <scope>NUCLEOTIDE SEQUENCE [LARGE SCALE GENOMIC DNA]</scope>
    <source>
        <strain>F2365</strain>
    </source>
</reference>
<organism>
    <name type="scientific">Listeria monocytogenes serotype 4b (strain F2365)</name>
    <dbReference type="NCBI Taxonomy" id="265669"/>
    <lineage>
        <taxon>Bacteria</taxon>
        <taxon>Bacillati</taxon>
        <taxon>Bacillota</taxon>
        <taxon>Bacilli</taxon>
        <taxon>Bacillales</taxon>
        <taxon>Listeriaceae</taxon>
        <taxon>Listeria</taxon>
    </lineage>
</organism>
<keyword id="KW-0687">Ribonucleoprotein</keyword>
<keyword id="KW-0689">Ribosomal protein</keyword>
<dbReference type="EMBL" id="AE017262">
    <property type="protein sequence ID" value="AAT05347.1"/>
    <property type="molecule type" value="Genomic_DNA"/>
</dbReference>
<dbReference type="RefSeq" id="WP_003720928.1">
    <property type="nucleotide sequence ID" value="NC_002973.6"/>
</dbReference>
<dbReference type="SMR" id="Q71WG9"/>
<dbReference type="GeneID" id="93240490"/>
<dbReference type="KEGG" id="lmf:LMOf2365_2582"/>
<dbReference type="HOGENOM" id="CLU_135723_6_2_9"/>
<dbReference type="GO" id="GO:0005737">
    <property type="term" value="C:cytoplasm"/>
    <property type="evidence" value="ECO:0007669"/>
    <property type="project" value="UniProtKB-ARBA"/>
</dbReference>
<dbReference type="GO" id="GO:1990904">
    <property type="term" value="C:ribonucleoprotein complex"/>
    <property type="evidence" value="ECO:0007669"/>
    <property type="project" value="UniProtKB-KW"/>
</dbReference>
<dbReference type="GO" id="GO:0005840">
    <property type="term" value="C:ribosome"/>
    <property type="evidence" value="ECO:0007669"/>
    <property type="project" value="UniProtKB-KW"/>
</dbReference>
<dbReference type="GO" id="GO:0003735">
    <property type="term" value="F:structural constituent of ribosome"/>
    <property type="evidence" value="ECO:0007669"/>
    <property type="project" value="InterPro"/>
</dbReference>
<dbReference type="GO" id="GO:0006412">
    <property type="term" value="P:translation"/>
    <property type="evidence" value="ECO:0007669"/>
    <property type="project" value="UniProtKB-UniRule"/>
</dbReference>
<dbReference type="HAMAP" id="MF_00251">
    <property type="entry name" value="Ribosomal_bL36"/>
    <property type="match status" value="1"/>
</dbReference>
<dbReference type="InterPro" id="IPR000473">
    <property type="entry name" value="Ribosomal_bL36"/>
</dbReference>
<dbReference type="InterPro" id="IPR035977">
    <property type="entry name" value="Ribosomal_bL36_sp"/>
</dbReference>
<dbReference type="NCBIfam" id="TIGR01022">
    <property type="entry name" value="rpmJ_bact"/>
    <property type="match status" value="1"/>
</dbReference>
<dbReference type="PANTHER" id="PTHR42888">
    <property type="entry name" value="50S RIBOSOMAL PROTEIN L36, CHLOROPLASTIC"/>
    <property type="match status" value="1"/>
</dbReference>
<dbReference type="PANTHER" id="PTHR42888:SF1">
    <property type="entry name" value="LARGE RIBOSOMAL SUBUNIT PROTEIN BL36C"/>
    <property type="match status" value="1"/>
</dbReference>
<dbReference type="Pfam" id="PF00444">
    <property type="entry name" value="Ribosomal_L36"/>
    <property type="match status" value="1"/>
</dbReference>
<dbReference type="SUPFAM" id="SSF57840">
    <property type="entry name" value="Ribosomal protein L36"/>
    <property type="match status" value="1"/>
</dbReference>
<dbReference type="PROSITE" id="PS00828">
    <property type="entry name" value="RIBOSOMAL_L36"/>
    <property type="match status" value="1"/>
</dbReference>
<evidence type="ECO:0000255" key="1">
    <source>
        <dbReference type="HAMAP-Rule" id="MF_00251"/>
    </source>
</evidence>
<evidence type="ECO:0000305" key="2"/>
<sequence>MKVRPSVKPMCEKCKVIRRKGKVMVICENPKHKQKQG</sequence>
<name>RL36_LISMF</name>
<proteinExistence type="inferred from homology"/>
<accession>Q71WG9</accession>
<comment type="similarity">
    <text evidence="1">Belongs to the bacterial ribosomal protein bL36 family.</text>
</comment>
<gene>
    <name evidence="1" type="primary">rpmJ</name>
    <name type="ordered locus">LMOf2365_2582</name>
</gene>
<feature type="chain" id="PRO_0000126207" description="Large ribosomal subunit protein bL36">
    <location>
        <begin position="1"/>
        <end position="37"/>
    </location>
</feature>